<evidence type="ECO:0000255" key="1"/>
<evidence type="ECO:0000269" key="2">
    <source>
    </source>
</evidence>
<evidence type="ECO:0000303" key="3">
    <source>
    </source>
</evidence>
<evidence type="ECO:0000305" key="4"/>
<keyword id="KW-0002">3D-structure</keyword>
<keyword id="KW-0966">Cell projection</keyword>
<keyword id="KW-0969">Cilium</keyword>
<keyword id="KW-0175">Coiled coil</keyword>
<keyword id="KW-0963">Cytoplasm</keyword>
<keyword id="KW-0206">Cytoskeleton</keyword>
<keyword id="KW-0282">Flagellum</keyword>
<keyword id="KW-1185">Reference proteome</keyword>
<keyword id="KW-0677">Repeat</keyword>
<keyword id="KW-0853">WD repeat</keyword>
<proteinExistence type="evidence at protein level"/>
<protein>
    <recommendedName>
        <fullName evidence="3">Cilia- and flagella-associated protein 43</fullName>
    </recommendedName>
</protein>
<sequence>MATNARILGFNSPSALVAAGDDFLLGAGGGIVIRRKEESSQWIPCEGRYAIGALAFSPSAGLLCVTEVKLDVSLHVFRFPERHHLQCIDNVATVDVQHMLFSSDGEMLALLTCIPTTCVTFYSAARGNRLVKCASTELGGVFCKHLTFPLHRHDCIAVLEPHGVRIACNMDSATFVPSILTLSSKGHYFHSCVWGTEGLYCGAGRGQVVLLDELRTDMKNYINCETPHNVTALLQNGTLLFIGTECGDVFTYNIDQKAQRLLVRLGRSVVRLLTLPDVNDVLVATSTDVTKISVDTAQSVFVRRRSASDTVKLLVLGGLVVIVCLDGSLVTYDQDTNTAGHTPVRFPEKVVDACVVGSVAVVVYDSGFVRSFTVENTVSVVSQMKVSDCPLTACTSDGVSLLAVCDKNVVHFIEVADGLLETAASSDIFACAVTNLRWAVNGGRSVLAACNNGEVHNLRFTGKCDSASAGVTVDMTWRLDFPVNDFLPLYGDGDVINIFVHSVDKDTKMYALERQRVKESKPLRPYFLMRDHECGGNVLQRLGGDSIISAGGDGRVVVRDISHYLMKLPPVPPTKEKKHPLKEFLLRPFGRGGITCLSVWNAAGGFVCGGNDSVVHLVPVGKSPIHYSWSEPFWHQRAISTSPSRASSPSDAETLSAERSRCRIISALADLRMEVEKLLQERTPTVRAEDFLLPEQRQAFNEECEMEIHKAREDDYYSLVHNEFVQHTIKTECWDVMEVQRSKIVSMTDPETEVHNFHLRKPCAQRAKIQKKIKLMRAIQIKTEECFTLSSLVKRAKEGNLCTEQQVCGPPSDVDELLYDTLDVYTGPRATIQLILLECKILHEKKSFNIRFDTLRERKSRELNLIAERNGRCVRIMQQLGEHTCPPNVLFTPVFDIEEDPQTVFEVFDSEIDPELLKLAVKSDDGELVVSPSDEAALKTWMDGLEKVTEVLRVNVPIPPFADNSLEQYVPPEERSDEQQRIFEEYEKEVAEQTVLINEKKELLRGEVAALVKANMTSAKAIDDEIDVLRTDRMLVAQLVDELELHQVNALCLFLLKKTIRNKFLGVKREEEDLLCRLRQLDSLYEYRLKLYLASEARVQDCIEEEKNMITDMRCLPPFTDPDWGERLNRRFTTWRSKYEDGLAKVPEPTRSGVVPIPLWEQYCQCCRAVVEARDKIIHLRGEADALNDEVVEVETEKKKAQFALDDKEKAEEACRKEVIEKVLDIQNLYTLQQGQVQDENAMVSDDFTDFSIRWVKNITDYNDLIFASFDEIRSLMSRSSQLRQSMKTCSWETERLLYCIGTLEMELRQLHTLRVTRQMQETIHTGAVTSLEREINKMDARIEAVRSVMSKKVEERNRVISKLKMQINDRRAENQYLNNQVQALTNSVEDKKAVWGMLGEHNNDKDRLRERMRELYENSELEELARCQQEELVRLKNEVDRLREATFPSFAVVTRRTAR</sequence>
<feature type="chain" id="PRO_0000445513" description="Cilia- and flagella-associated protein 43">
    <location>
        <begin position="1"/>
        <end position="1460"/>
    </location>
</feature>
<feature type="repeat" description="WD 1" evidence="1">
    <location>
        <begin position="46"/>
        <end position="87"/>
    </location>
</feature>
<feature type="repeat" description="WD 2" evidence="1">
    <location>
        <begin position="91"/>
        <end position="132"/>
    </location>
</feature>
<feature type="repeat" description="WD 3" evidence="1">
    <location>
        <begin position="184"/>
        <end position="221"/>
    </location>
</feature>
<feature type="repeat" description="WD 4" evidence="1">
    <location>
        <begin position="303"/>
        <end position="342"/>
    </location>
</feature>
<feature type="repeat" description="WD 5" evidence="1">
    <location>
        <begin position="428"/>
        <end position="468"/>
    </location>
</feature>
<feature type="repeat" description="WD 6" evidence="1">
    <location>
        <begin position="529"/>
        <end position="569"/>
    </location>
</feature>
<feature type="repeat" description="WD 7" evidence="1">
    <location>
        <begin position="589"/>
        <end position="628"/>
    </location>
</feature>
<feature type="repeat" description="WD 8" evidence="1">
    <location>
        <begin position="911"/>
        <end position="951"/>
    </location>
</feature>
<feature type="repeat" description="WD 9" evidence="1">
    <location>
        <begin position="1129"/>
        <end position="1170"/>
    </location>
</feature>
<feature type="coiled-coil region" evidence="1">
    <location>
        <begin position="1170"/>
        <end position="1214"/>
    </location>
</feature>
<feature type="coiled-coil region" evidence="1">
    <location>
        <begin position="1399"/>
        <end position="1446"/>
    </location>
</feature>
<accession>Q580P9</accession>
<accession>D6XEU2</accession>
<reference key="1">
    <citation type="journal article" date="2005" name="Science">
        <title>The genome of the African trypanosome Trypanosoma brucei.</title>
        <authorList>
            <person name="Berriman M."/>
            <person name="Ghedin E."/>
            <person name="Hertz-Fowler C."/>
            <person name="Blandin G."/>
            <person name="Renauld H."/>
            <person name="Bartholomeu D.C."/>
            <person name="Lennard N.J."/>
            <person name="Caler E."/>
            <person name="Hamlin N.E."/>
            <person name="Haas B."/>
            <person name="Bohme U."/>
            <person name="Hannick L."/>
            <person name="Aslett M.A."/>
            <person name="Shallom J."/>
            <person name="Marcello L."/>
            <person name="Hou L."/>
            <person name="Wickstead B."/>
            <person name="Alsmark U.C.M."/>
            <person name="Arrowsmith C."/>
            <person name="Atkin R.J."/>
            <person name="Barron A.J."/>
            <person name="Bringaud F."/>
            <person name="Brooks K."/>
            <person name="Carrington M."/>
            <person name="Cherevach I."/>
            <person name="Chillingworth T.J."/>
            <person name="Churcher C."/>
            <person name="Clark L.N."/>
            <person name="Corton C.H."/>
            <person name="Cronin A."/>
            <person name="Davies R.M."/>
            <person name="Doggett J."/>
            <person name="Djikeng A."/>
            <person name="Feldblyum T."/>
            <person name="Field M.C."/>
            <person name="Fraser A."/>
            <person name="Goodhead I."/>
            <person name="Hance Z."/>
            <person name="Harper D."/>
            <person name="Harris B.R."/>
            <person name="Hauser H."/>
            <person name="Hostetler J."/>
            <person name="Ivens A."/>
            <person name="Jagels K."/>
            <person name="Johnson D."/>
            <person name="Johnson J."/>
            <person name="Jones K."/>
            <person name="Kerhornou A.X."/>
            <person name="Koo H."/>
            <person name="Larke N."/>
            <person name="Landfear S."/>
            <person name="Larkin C."/>
            <person name="Leech V."/>
            <person name="Line A."/>
            <person name="Lord A."/>
            <person name="Macleod A."/>
            <person name="Mooney P.J."/>
            <person name="Moule S."/>
            <person name="Martin D.M."/>
            <person name="Morgan G.W."/>
            <person name="Mungall K."/>
            <person name="Norbertczak H."/>
            <person name="Ormond D."/>
            <person name="Pai G."/>
            <person name="Peacock C.S."/>
            <person name="Peterson J."/>
            <person name="Quail M.A."/>
            <person name="Rabbinowitsch E."/>
            <person name="Rajandream M.A."/>
            <person name="Reitter C."/>
            <person name="Salzberg S.L."/>
            <person name="Sanders M."/>
            <person name="Schobel S."/>
            <person name="Sharp S."/>
            <person name="Simmonds M."/>
            <person name="Simpson A.J."/>
            <person name="Tallon L."/>
            <person name="Turner C.M."/>
            <person name="Tait A."/>
            <person name="Tivey A.R."/>
            <person name="Van Aken S."/>
            <person name="Walker D."/>
            <person name="Wanless D."/>
            <person name="Wang S."/>
            <person name="White B."/>
            <person name="White O."/>
            <person name="Whitehead S."/>
            <person name="Woodward J."/>
            <person name="Wortman J."/>
            <person name="Adams M.D."/>
            <person name="Embley T.M."/>
            <person name="Gull K."/>
            <person name="Ullu E."/>
            <person name="Barry J.D."/>
            <person name="Fairlamb A.H."/>
            <person name="Opperdoes F."/>
            <person name="Barrell B.G."/>
            <person name="Donelson J.E."/>
            <person name="Hall N."/>
            <person name="Fraser C.M."/>
            <person name="Melville S.E."/>
            <person name="El-Sayed N.M.A."/>
        </authorList>
    </citation>
    <scope>NUCLEOTIDE SEQUENCE [LARGE SCALE GENOMIC DNA]</scope>
    <source>
        <strain>927/4 GUTat10.1</strain>
    </source>
</reference>
<reference key="2">
    <citation type="journal article" date="2018" name="Nat. Commun.">
        <title>Mutations in CFAP43 and CFAP44 cause male infertility and flagellum defects in Trypanosoma and human.</title>
        <authorList>
            <person name="Coutton C."/>
            <person name="Vargas A.S."/>
            <person name="Amiri-Yekta A."/>
            <person name="Kherraf Z.E."/>
            <person name="Ben Mustapha S.F."/>
            <person name="Le Tanno P."/>
            <person name="Wambergue-Legrand C."/>
            <person name="Karaouzene T."/>
            <person name="Martinez G."/>
            <person name="Crouzy S."/>
            <person name="Daneshipour A."/>
            <person name="Hosseini S.H."/>
            <person name="Mitchell V."/>
            <person name="Halouani L."/>
            <person name="Marrakchi O."/>
            <person name="Makni M."/>
            <person name="Latrous H."/>
            <person name="Kharouf M."/>
            <person name="Deleuze J.F."/>
            <person name="Boland A."/>
            <person name="Hennebicq S."/>
            <person name="Satre V."/>
            <person name="Jouk P.S."/>
            <person name="Thierry-Mieg N."/>
            <person name="Conne B."/>
            <person name="Dacheux D."/>
            <person name="Landrein N."/>
            <person name="Schmitt A."/>
            <person name="Stouvenel L."/>
            <person name="Lores P."/>
            <person name="El Khouri E."/>
            <person name="Bottari S.P."/>
            <person name="Faure J."/>
            <person name="Wolf J.P."/>
            <person name="Pernet-Gallay K."/>
            <person name="Escoffier J."/>
            <person name="Gourabi H."/>
            <person name="Robinson D.R."/>
            <person name="Nef S."/>
            <person name="Dulioust E."/>
            <person name="Zouari R."/>
            <person name="Bonhivers M."/>
            <person name="Toure A."/>
            <person name="Arnoult C."/>
            <person name="Ray P.F."/>
        </authorList>
    </citation>
    <scope>SUBCELLULAR LOCATION</scope>
    <scope>FUNCTION</scope>
</reference>
<name>CFA43_TRYB2</name>
<dbReference type="EMBL" id="AC096672">
    <property type="protein sequence ID" value="AAX79135.1"/>
    <property type="molecule type" value="Genomic_DNA"/>
</dbReference>
<dbReference type="EMBL" id="CP000067">
    <property type="protein sequence ID" value="AAZ11125.1"/>
    <property type="molecule type" value="Genomic_DNA"/>
</dbReference>
<dbReference type="RefSeq" id="XP_844684.1">
    <property type="nucleotide sequence ID" value="XM_839591.1"/>
</dbReference>
<dbReference type="PDB" id="9E5C">
    <property type="method" value="EM"/>
    <property type="resolution" value="3.20 A"/>
    <property type="chains" value="1r=1-1460"/>
</dbReference>
<dbReference type="PDBsum" id="9E5C"/>
<dbReference type="EMDB" id="EMD-47524"/>
<dbReference type="SMR" id="Q580P9"/>
<dbReference type="STRING" id="185431.Q580P9"/>
<dbReference type="PaxDb" id="5691-AAZ11125"/>
<dbReference type="GeneID" id="3657075"/>
<dbReference type="KEGG" id="tbr:Tb927.4.5380"/>
<dbReference type="VEuPathDB" id="TriTrypDB:Tb927.4.5380"/>
<dbReference type="eggNOG" id="ENOG502QQ39">
    <property type="taxonomic scope" value="Eukaryota"/>
</dbReference>
<dbReference type="InParanoid" id="Q580P9"/>
<dbReference type="OMA" id="HRRFVRW"/>
<dbReference type="OrthoDB" id="64353at2759"/>
<dbReference type="Proteomes" id="UP000008524">
    <property type="component" value="Chromosome 4"/>
</dbReference>
<dbReference type="GO" id="GO:0005930">
    <property type="term" value="C:axoneme"/>
    <property type="evidence" value="ECO:0000314"/>
    <property type="project" value="UniProtKB"/>
</dbReference>
<dbReference type="GO" id="GO:0005737">
    <property type="term" value="C:cytoplasm"/>
    <property type="evidence" value="ECO:0000314"/>
    <property type="project" value="GeneDB"/>
</dbReference>
<dbReference type="GO" id="GO:0031514">
    <property type="term" value="C:motile cilium"/>
    <property type="evidence" value="ECO:0007669"/>
    <property type="project" value="UniProtKB-SubCell"/>
</dbReference>
<dbReference type="GO" id="GO:0035082">
    <property type="term" value="P:axoneme assembly"/>
    <property type="evidence" value="ECO:0000315"/>
    <property type="project" value="GeneDB"/>
</dbReference>
<dbReference type="GO" id="GO:0060271">
    <property type="term" value="P:cilium assembly"/>
    <property type="evidence" value="ECO:0000318"/>
    <property type="project" value="GO_Central"/>
</dbReference>
<dbReference type="GO" id="GO:0060285">
    <property type="term" value="P:cilium-dependent cell motility"/>
    <property type="evidence" value="ECO:0000315"/>
    <property type="project" value="UniProtKB"/>
</dbReference>
<dbReference type="GO" id="GO:0007283">
    <property type="term" value="P:spermatogenesis"/>
    <property type="evidence" value="ECO:0000315"/>
    <property type="project" value="GeneDB"/>
</dbReference>
<dbReference type="Gene3D" id="2.130.10.10">
    <property type="entry name" value="YVTN repeat-like/Quinoprotein amine dehydrogenase"/>
    <property type="match status" value="2"/>
</dbReference>
<dbReference type="InterPro" id="IPR056297">
    <property type="entry name" value="Beta-prop_CFAP43_2nd"/>
</dbReference>
<dbReference type="InterPro" id="IPR056296">
    <property type="entry name" value="CFAP43_N"/>
</dbReference>
<dbReference type="InterPro" id="IPR015943">
    <property type="entry name" value="WD40/YVTN_repeat-like_dom_sf"/>
</dbReference>
<dbReference type="InterPro" id="IPR036322">
    <property type="entry name" value="WD40_repeat_dom_sf"/>
</dbReference>
<dbReference type="PANTHER" id="PTHR14885:SF1">
    <property type="entry name" value="CILIA- AND FLAGELLA-ASSOCIATED PROTEIN 43"/>
    <property type="match status" value="1"/>
</dbReference>
<dbReference type="PANTHER" id="PTHR14885">
    <property type="entry name" value="CILIA- AND FLAGELLA-ASSOCIATED PROTEIN 43-RELATED"/>
    <property type="match status" value="1"/>
</dbReference>
<dbReference type="Pfam" id="PF23185">
    <property type="entry name" value="CFAP43_N"/>
    <property type="match status" value="1"/>
</dbReference>
<dbReference type="Pfam" id="PF23184">
    <property type="entry name" value="WD40_CFAP43"/>
    <property type="match status" value="1"/>
</dbReference>
<dbReference type="SUPFAM" id="SSF69322">
    <property type="entry name" value="Tricorn protease domain 2"/>
    <property type="match status" value="1"/>
</dbReference>
<dbReference type="SUPFAM" id="SSF50978">
    <property type="entry name" value="WD40 repeat-like"/>
    <property type="match status" value="1"/>
</dbReference>
<gene>
    <name evidence="3" type="primary">CFAP43</name>
    <name type="ORF">Tb927.4.5380</name>
</gene>
<organism>
    <name type="scientific">Trypanosoma brucei brucei (strain 927/4 GUTat10.1)</name>
    <dbReference type="NCBI Taxonomy" id="185431"/>
    <lineage>
        <taxon>Eukaryota</taxon>
        <taxon>Discoba</taxon>
        <taxon>Euglenozoa</taxon>
        <taxon>Kinetoplastea</taxon>
        <taxon>Metakinetoplastina</taxon>
        <taxon>Trypanosomatida</taxon>
        <taxon>Trypanosomatidae</taxon>
        <taxon>Trypanosoma</taxon>
    </lineage>
</organism>
<comment type="function">
    <text evidence="2">Flagellar protein involved in flagellum axoneme organization and function.</text>
</comment>
<comment type="subcellular location">
    <subcellularLocation>
        <location evidence="2">Cell projection</location>
        <location evidence="2">Cilium</location>
        <location evidence="2">Flagellum</location>
    </subcellularLocation>
    <subcellularLocation>
        <location evidence="2">Cytoplasm</location>
        <location evidence="2">Cytoskeleton</location>
        <location evidence="2">Flagellum axoneme</location>
    </subcellularLocation>
    <text evidence="2">Closely associated to the axoneme along the paraflagellar rod.</text>
</comment>
<comment type="similarity">
    <text evidence="4">Belongs to the CFAP43 family.</text>
</comment>